<name>POL_HV2ST</name>
<dbReference type="EC" id="3.4.23.47"/>
<dbReference type="EC" id="2.7.7.49"/>
<dbReference type="EC" id="2.7.7.7"/>
<dbReference type="EC" id="3.1.26.13"/>
<dbReference type="EC" id="3.1.13.2"/>
<dbReference type="EC" id="2.7.7.-" evidence="5"/>
<dbReference type="EC" id="3.1.-.-" evidence="5"/>
<dbReference type="EMBL" id="M31113">
    <property type="status" value="NOT_ANNOTATED_CDS"/>
    <property type="molecule type" value="Genomic_DNA"/>
</dbReference>
<dbReference type="PIR" id="B33943">
    <property type="entry name" value="GNLJST"/>
</dbReference>
<dbReference type="SMR" id="P20876"/>
<dbReference type="PRO" id="PR:P20876"/>
<dbReference type="Proteomes" id="UP000007713">
    <property type="component" value="Segment"/>
</dbReference>
<dbReference type="GO" id="GO:0043657">
    <property type="term" value="C:host cell"/>
    <property type="evidence" value="ECO:0007669"/>
    <property type="project" value="GOC"/>
</dbReference>
<dbReference type="GO" id="GO:0042025">
    <property type="term" value="C:host cell nucleus"/>
    <property type="evidence" value="ECO:0007669"/>
    <property type="project" value="UniProtKB-SubCell"/>
</dbReference>
<dbReference type="GO" id="GO:0020002">
    <property type="term" value="C:host cell plasma membrane"/>
    <property type="evidence" value="ECO:0007669"/>
    <property type="project" value="UniProtKB-SubCell"/>
</dbReference>
<dbReference type="GO" id="GO:0072494">
    <property type="term" value="C:host multivesicular body"/>
    <property type="evidence" value="ECO:0007669"/>
    <property type="project" value="UniProtKB-SubCell"/>
</dbReference>
<dbReference type="GO" id="GO:0016020">
    <property type="term" value="C:membrane"/>
    <property type="evidence" value="ECO:0007669"/>
    <property type="project" value="UniProtKB-KW"/>
</dbReference>
<dbReference type="GO" id="GO:0019013">
    <property type="term" value="C:viral nucleocapsid"/>
    <property type="evidence" value="ECO:0007669"/>
    <property type="project" value="UniProtKB-KW"/>
</dbReference>
<dbReference type="GO" id="GO:0055036">
    <property type="term" value="C:virion membrane"/>
    <property type="evidence" value="ECO:0007669"/>
    <property type="project" value="UniProtKB-SubCell"/>
</dbReference>
<dbReference type="GO" id="GO:0004190">
    <property type="term" value="F:aspartic-type endopeptidase activity"/>
    <property type="evidence" value="ECO:0007669"/>
    <property type="project" value="UniProtKB-KW"/>
</dbReference>
<dbReference type="GO" id="GO:0003677">
    <property type="term" value="F:DNA binding"/>
    <property type="evidence" value="ECO:0007669"/>
    <property type="project" value="UniProtKB-KW"/>
</dbReference>
<dbReference type="GO" id="GO:0003887">
    <property type="term" value="F:DNA-directed DNA polymerase activity"/>
    <property type="evidence" value="ECO:0007669"/>
    <property type="project" value="UniProtKB-KW"/>
</dbReference>
<dbReference type="GO" id="GO:0004533">
    <property type="term" value="F:exoribonuclease H activity"/>
    <property type="evidence" value="ECO:0007669"/>
    <property type="project" value="UniProtKB-EC"/>
</dbReference>
<dbReference type="GO" id="GO:0008289">
    <property type="term" value="F:lipid binding"/>
    <property type="evidence" value="ECO:0007669"/>
    <property type="project" value="UniProtKB-KW"/>
</dbReference>
<dbReference type="GO" id="GO:0035613">
    <property type="term" value="F:RNA stem-loop binding"/>
    <property type="evidence" value="ECO:0007669"/>
    <property type="project" value="TreeGrafter"/>
</dbReference>
<dbReference type="GO" id="GO:0003964">
    <property type="term" value="F:RNA-directed DNA polymerase activity"/>
    <property type="evidence" value="ECO:0007669"/>
    <property type="project" value="UniProtKB-KW"/>
</dbReference>
<dbReference type="GO" id="GO:0004523">
    <property type="term" value="F:RNA-DNA hybrid ribonuclease activity"/>
    <property type="evidence" value="ECO:0007669"/>
    <property type="project" value="InterPro"/>
</dbReference>
<dbReference type="GO" id="GO:0005198">
    <property type="term" value="F:structural molecule activity"/>
    <property type="evidence" value="ECO:0007669"/>
    <property type="project" value="InterPro"/>
</dbReference>
<dbReference type="GO" id="GO:0008270">
    <property type="term" value="F:zinc ion binding"/>
    <property type="evidence" value="ECO:0007669"/>
    <property type="project" value="UniProtKB-KW"/>
</dbReference>
<dbReference type="GO" id="GO:0015074">
    <property type="term" value="P:DNA integration"/>
    <property type="evidence" value="ECO:0007669"/>
    <property type="project" value="UniProtKB-KW"/>
</dbReference>
<dbReference type="GO" id="GO:0006310">
    <property type="term" value="P:DNA recombination"/>
    <property type="evidence" value="ECO:0007669"/>
    <property type="project" value="UniProtKB-KW"/>
</dbReference>
<dbReference type="GO" id="GO:0075713">
    <property type="term" value="P:establishment of integrated proviral latency"/>
    <property type="evidence" value="ECO:0007669"/>
    <property type="project" value="UniProtKB-KW"/>
</dbReference>
<dbReference type="GO" id="GO:0006508">
    <property type="term" value="P:proteolysis"/>
    <property type="evidence" value="ECO:0007669"/>
    <property type="project" value="UniProtKB-KW"/>
</dbReference>
<dbReference type="GO" id="GO:0046718">
    <property type="term" value="P:symbiont entry into host cell"/>
    <property type="evidence" value="ECO:0007669"/>
    <property type="project" value="UniProtKB-KW"/>
</dbReference>
<dbReference type="GO" id="GO:0039657">
    <property type="term" value="P:symbiont-mediated suppression of host gene expression"/>
    <property type="evidence" value="ECO:0007669"/>
    <property type="project" value="UniProtKB-KW"/>
</dbReference>
<dbReference type="GO" id="GO:0044826">
    <property type="term" value="P:viral genome integration into host DNA"/>
    <property type="evidence" value="ECO:0007669"/>
    <property type="project" value="UniProtKB-KW"/>
</dbReference>
<dbReference type="GO" id="GO:0075732">
    <property type="term" value="P:viral penetration into host nucleus"/>
    <property type="evidence" value="ECO:0007669"/>
    <property type="project" value="UniProtKB-KW"/>
</dbReference>
<dbReference type="GO" id="GO:0075523">
    <property type="term" value="P:viral translational frameshifting"/>
    <property type="evidence" value="ECO:0007669"/>
    <property type="project" value="UniProtKB-KW"/>
</dbReference>
<dbReference type="CDD" id="cd05482">
    <property type="entry name" value="HIV_retropepsin_like"/>
    <property type="match status" value="1"/>
</dbReference>
<dbReference type="Gene3D" id="1.10.10.200">
    <property type="match status" value="1"/>
</dbReference>
<dbReference type="Gene3D" id="1.10.1200.30">
    <property type="match status" value="1"/>
</dbReference>
<dbReference type="Gene3D" id="3.30.70.270">
    <property type="match status" value="3"/>
</dbReference>
<dbReference type="Gene3D" id="2.40.70.10">
    <property type="entry name" value="Acid Proteases"/>
    <property type="match status" value="1"/>
</dbReference>
<dbReference type="Gene3D" id="3.10.10.10">
    <property type="entry name" value="HIV Type 1 Reverse Transcriptase, subunit A, domain 1"/>
    <property type="match status" value="1"/>
</dbReference>
<dbReference type="Gene3D" id="1.10.375.10">
    <property type="entry name" value="Human Immunodeficiency Virus Type 1 Capsid Protein"/>
    <property type="match status" value="1"/>
</dbReference>
<dbReference type="Gene3D" id="1.10.150.90">
    <property type="entry name" value="Immunodeficiency lentiviruses, gag gene matrix protein p17"/>
    <property type="match status" value="1"/>
</dbReference>
<dbReference type="Gene3D" id="2.30.30.10">
    <property type="entry name" value="Integrase, C-terminal domain superfamily, retroviral"/>
    <property type="match status" value="1"/>
</dbReference>
<dbReference type="Gene3D" id="3.30.420.10">
    <property type="entry name" value="Ribonuclease H-like superfamily/Ribonuclease H"/>
    <property type="match status" value="2"/>
</dbReference>
<dbReference type="Gene3D" id="1.20.5.760">
    <property type="entry name" value="Single helix bin"/>
    <property type="match status" value="1"/>
</dbReference>
<dbReference type="Gene3D" id="4.10.60.10">
    <property type="entry name" value="Zinc finger, CCHC-type"/>
    <property type="match status" value="1"/>
</dbReference>
<dbReference type="InterPro" id="IPR001969">
    <property type="entry name" value="Aspartic_peptidase_AS"/>
</dbReference>
<dbReference type="InterPro" id="IPR043502">
    <property type="entry name" value="DNA/RNA_pol_sf"/>
</dbReference>
<dbReference type="InterPro" id="IPR045345">
    <property type="entry name" value="Gag_p24_C"/>
</dbReference>
<dbReference type="InterPro" id="IPR017856">
    <property type="entry name" value="Integrase-like_N"/>
</dbReference>
<dbReference type="InterPro" id="IPR036862">
    <property type="entry name" value="Integrase_C_dom_sf_retrovir"/>
</dbReference>
<dbReference type="InterPro" id="IPR001037">
    <property type="entry name" value="Integrase_C_retrovir"/>
</dbReference>
<dbReference type="InterPro" id="IPR001584">
    <property type="entry name" value="Integrase_cat-core"/>
</dbReference>
<dbReference type="InterPro" id="IPR003308">
    <property type="entry name" value="Integrase_Zn-bd_dom_N"/>
</dbReference>
<dbReference type="InterPro" id="IPR000071">
    <property type="entry name" value="Lentvrl_matrix_N"/>
</dbReference>
<dbReference type="InterPro" id="IPR012344">
    <property type="entry name" value="Matrix_HIV/RSV_N"/>
</dbReference>
<dbReference type="InterPro" id="IPR001995">
    <property type="entry name" value="Peptidase_A2_cat"/>
</dbReference>
<dbReference type="InterPro" id="IPR021109">
    <property type="entry name" value="Peptidase_aspartic_dom_sf"/>
</dbReference>
<dbReference type="InterPro" id="IPR034170">
    <property type="entry name" value="Retropepsin-like_cat_dom"/>
</dbReference>
<dbReference type="InterPro" id="IPR018061">
    <property type="entry name" value="Retropepsins"/>
</dbReference>
<dbReference type="InterPro" id="IPR008916">
    <property type="entry name" value="Retrov_capsid_C"/>
</dbReference>
<dbReference type="InterPro" id="IPR008919">
    <property type="entry name" value="Retrov_capsid_N"/>
</dbReference>
<dbReference type="InterPro" id="IPR010999">
    <property type="entry name" value="Retrovr_matrix"/>
</dbReference>
<dbReference type="InterPro" id="IPR043128">
    <property type="entry name" value="Rev_trsase/Diguanyl_cyclase"/>
</dbReference>
<dbReference type="InterPro" id="IPR012337">
    <property type="entry name" value="RNaseH-like_sf"/>
</dbReference>
<dbReference type="InterPro" id="IPR002156">
    <property type="entry name" value="RNaseH_domain"/>
</dbReference>
<dbReference type="InterPro" id="IPR036397">
    <property type="entry name" value="RNaseH_sf"/>
</dbReference>
<dbReference type="InterPro" id="IPR000477">
    <property type="entry name" value="RT_dom"/>
</dbReference>
<dbReference type="InterPro" id="IPR010659">
    <property type="entry name" value="RVT_connect"/>
</dbReference>
<dbReference type="InterPro" id="IPR010661">
    <property type="entry name" value="RVT_thumb"/>
</dbReference>
<dbReference type="InterPro" id="IPR001878">
    <property type="entry name" value="Znf_CCHC"/>
</dbReference>
<dbReference type="InterPro" id="IPR036875">
    <property type="entry name" value="Znf_CCHC_sf"/>
</dbReference>
<dbReference type="PANTHER" id="PTHR41694">
    <property type="entry name" value="ENDOGENOUS RETROVIRUS GROUP K MEMBER POL PROTEIN"/>
    <property type="match status" value="1"/>
</dbReference>
<dbReference type="PANTHER" id="PTHR41694:SF3">
    <property type="entry name" value="RNA-DIRECTED DNA POLYMERASE-RELATED"/>
    <property type="match status" value="1"/>
</dbReference>
<dbReference type="Pfam" id="PF00540">
    <property type="entry name" value="Gag_p17"/>
    <property type="match status" value="1"/>
</dbReference>
<dbReference type="Pfam" id="PF00607">
    <property type="entry name" value="Gag_p24"/>
    <property type="match status" value="1"/>
</dbReference>
<dbReference type="Pfam" id="PF19317">
    <property type="entry name" value="Gag_p24_C"/>
    <property type="match status" value="1"/>
</dbReference>
<dbReference type="Pfam" id="PF00552">
    <property type="entry name" value="IN_DBD_C"/>
    <property type="match status" value="1"/>
</dbReference>
<dbReference type="Pfam" id="PF02022">
    <property type="entry name" value="Integrase_Zn"/>
    <property type="match status" value="1"/>
</dbReference>
<dbReference type="Pfam" id="PF00075">
    <property type="entry name" value="RNase_H"/>
    <property type="match status" value="1"/>
</dbReference>
<dbReference type="Pfam" id="PF00665">
    <property type="entry name" value="rve"/>
    <property type="match status" value="1"/>
</dbReference>
<dbReference type="Pfam" id="PF00077">
    <property type="entry name" value="RVP"/>
    <property type="match status" value="1"/>
</dbReference>
<dbReference type="Pfam" id="PF00078">
    <property type="entry name" value="RVT_1"/>
    <property type="match status" value="1"/>
</dbReference>
<dbReference type="Pfam" id="PF06815">
    <property type="entry name" value="RVT_connect"/>
    <property type="match status" value="1"/>
</dbReference>
<dbReference type="Pfam" id="PF06817">
    <property type="entry name" value="RVT_thumb"/>
    <property type="match status" value="1"/>
</dbReference>
<dbReference type="Pfam" id="PF00098">
    <property type="entry name" value="zf-CCHC"/>
    <property type="match status" value="2"/>
</dbReference>
<dbReference type="PRINTS" id="PR00234">
    <property type="entry name" value="HIV1MATRIX"/>
</dbReference>
<dbReference type="SMART" id="SM00343">
    <property type="entry name" value="ZnF_C2HC"/>
    <property type="match status" value="2"/>
</dbReference>
<dbReference type="SUPFAM" id="SSF50630">
    <property type="entry name" value="Acid proteases"/>
    <property type="match status" value="1"/>
</dbReference>
<dbReference type="SUPFAM" id="SSF50122">
    <property type="entry name" value="DNA-binding domain of retroviral integrase"/>
    <property type="match status" value="1"/>
</dbReference>
<dbReference type="SUPFAM" id="SSF56672">
    <property type="entry name" value="DNA/RNA polymerases"/>
    <property type="match status" value="1"/>
</dbReference>
<dbReference type="SUPFAM" id="SSF46919">
    <property type="entry name" value="N-terminal Zn binding domain of HIV integrase"/>
    <property type="match status" value="1"/>
</dbReference>
<dbReference type="SUPFAM" id="SSF47836">
    <property type="entry name" value="Retroviral matrix proteins"/>
    <property type="match status" value="1"/>
</dbReference>
<dbReference type="SUPFAM" id="SSF47353">
    <property type="entry name" value="Retrovirus capsid dimerization domain-like"/>
    <property type="match status" value="1"/>
</dbReference>
<dbReference type="SUPFAM" id="SSF47943">
    <property type="entry name" value="Retrovirus capsid protein, N-terminal core domain"/>
    <property type="match status" value="1"/>
</dbReference>
<dbReference type="SUPFAM" id="SSF57756">
    <property type="entry name" value="Retrovirus zinc finger-like domains"/>
    <property type="match status" value="1"/>
</dbReference>
<dbReference type="SUPFAM" id="SSF53098">
    <property type="entry name" value="Ribonuclease H-like"/>
    <property type="match status" value="2"/>
</dbReference>
<dbReference type="PROSITE" id="PS50175">
    <property type="entry name" value="ASP_PROT_RETROV"/>
    <property type="match status" value="1"/>
</dbReference>
<dbReference type="PROSITE" id="PS00141">
    <property type="entry name" value="ASP_PROTEASE"/>
    <property type="match status" value="1"/>
</dbReference>
<dbReference type="PROSITE" id="PS50994">
    <property type="entry name" value="INTEGRASE"/>
    <property type="match status" value="1"/>
</dbReference>
<dbReference type="PROSITE" id="PS51027">
    <property type="entry name" value="INTEGRASE_DBD"/>
    <property type="match status" value="1"/>
</dbReference>
<dbReference type="PROSITE" id="PS50879">
    <property type="entry name" value="RNASE_H_1"/>
    <property type="match status" value="1"/>
</dbReference>
<dbReference type="PROSITE" id="PS50878">
    <property type="entry name" value="RT_POL"/>
    <property type="match status" value="1"/>
</dbReference>
<dbReference type="PROSITE" id="PS50158">
    <property type="entry name" value="ZF_CCHC"/>
    <property type="match status" value="2"/>
</dbReference>
<dbReference type="PROSITE" id="PS50876">
    <property type="entry name" value="ZF_INTEGRASE"/>
    <property type="match status" value="1"/>
</dbReference>
<feature type="initiator methionine" description="Removed; by host" evidence="1">
    <location>
        <position position="1"/>
    </location>
</feature>
<feature type="chain" id="PRO_0000261300" description="Gag-Pol polyprotein">
    <location>
        <begin position="2"/>
        <end position="1463"/>
    </location>
</feature>
<feature type="chain" id="PRO_0000042548" description="Matrix protein p17" evidence="1">
    <location>
        <begin position="2"/>
        <end position="135"/>
    </location>
</feature>
<feature type="chain" id="PRO_0000042549" description="Capsid protein p24" evidence="1">
    <location>
        <begin position="136"/>
        <end position="365"/>
    </location>
</feature>
<feature type="peptide" id="PRO_0000042550" description="Spacer peptide 1" evidence="1">
    <location>
        <begin position="366"/>
        <end position="382"/>
    </location>
</feature>
<feature type="chain" id="PRO_0000042551" description="Nucleocapsid protein p7" evidence="1">
    <location>
        <begin position="383"/>
        <end position="431"/>
    </location>
</feature>
<feature type="peptide" id="PRO_0000246749" description="Transframe peptide" evidence="9">
    <location>
        <begin position="432"/>
        <end position="445"/>
    </location>
</feature>
<feature type="chain" id="PRO_0000042552" description="p6-pol" evidence="9">
    <location>
        <begin position="446"/>
        <end position="512"/>
    </location>
</feature>
<feature type="chain" id="PRO_0000038675" description="Protease" evidence="1">
    <location>
        <begin position="513"/>
        <end position="611"/>
    </location>
</feature>
<feature type="chain" id="PRO_0000042553" description="Reverse transcriptase/ribonuclease H" evidence="1">
    <location>
        <begin position="612"/>
        <end position="1170"/>
    </location>
</feature>
<feature type="chain" id="PRO_0000042554" description="p51 RT" evidence="1">
    <location>
        <begin position="612"/>
        <end position="1050"/>
    </location>
</feature>
<feature type="chain" id="PRO_0000042555" description="p15" evidence="1">
    <location>
        <begin position="1051"/>
        <end position="1170"/>
    </location>
</feature>
<feature type="chain" id="PRO_0000042556" description="Integrase" evidence="1">
    <location>
        <begin position="1171"/>
        <end position="1463"/>
    </location>
</feature>
<feature type="domain" description="Peptidase A2" evidence="11">
    <location>
        <begin position="532"/>
        <end position="601"/>
    </location>
</feature>
<feature type="domain" description="Reverse transcriptase" evidence="12">
    <location>
        <begin position="655"/>
        <end position="845"/>
    </location>
</feature>
<feature type="domain" description="RNase H type-1" evidence="13">
    <location>
        <begin position="1044"/>
        <end position="1167"/>
    </location>
</feature>
<feature type="domain" description="Integrase catalytic" evidence="15">
    <location>
        <begin position="1223"/>
        <end position="1374"/>
    </location>
</feature>
<feature type="zinc finger region" description="CCHC-type 1" evidence="10">
    <location>
        <begin position="389"/>
        <end position="406"/>
    </location>
</feature>
<feature type="zinc finger region" description="CCHC-type 2" evidence="10">
    <location>
        <begin position="410"/>
        <end position="427"/>
    </location>
</feature>
<feature type="zinc finger region" description="Integrase-type" evidence="14">
    <location>
        <begin position="1173"/>
        <end position="1214"/>
    </location>
</feature>
<feature type="DNA-binding region" description="Integrase-type" evidence="16">
    <location>
        <begin position="1393"/>
        <end position="1440"/>
    </location>
</feature>
<feature type="region of interest" description="Interaction with Gp41" evidence="8">
    <location>
        <begin position="7"/>
        <end position="31"/>
    </location>
</feature>
<feature type="region of interest" description="Disordered" evidence="18">
    <location>
        <begin position="112"/>
        <end position="138"/>
    </location>
</feature>
<feature type="region of interest" description="Interaction with human PPIA/CYPA and NUP153" evidence="8">
    <location>
        <begin position="191"/>
        <end position="228"/>
    </location>
</feature>
<feature type="region of interest" description="Dimerization/Multimerization of capsid protein p24" evidence="5">
    <location>
        <begin position="279"/>
        <end position="365"/>
    </location>
</feature>
<feature type="region of interest" description="Disordered" evidence="18">
    <location>
        <begin position="441"/>
        <end position="508"/>
    </location>
</feature>
<feature type="region of interest" description="Dimerization of protease" evidence="5">
    <location>
        <begin position="513"/>
        <end position="517"/>
    </location>
</feature>
<feature type="region of interest" description="Dimerization of protease" evidence="5">
    <location>
        <begin position="561"/>
        <end position="567"/>
    </location>
</feature>
<feature type="region of interest" description="Dimerization of protease" evidence="5">
    <location>
        <begin position="600"/>
        <end position="612"/>
    </location>
</feature>
<feature type="region of interest" description="RT 'primer grip'" evidence="1">
    <location>
        <begin position="838"/>
        <end position="846"/>
    </location>
</feature>
<feature type="short sequence motif" description="Nuclear export signal" evidence="1">
    <location>
        <begin position="16"/>
        <end position="22"/>
    </location>
</feature>
<feature type="short sequence motif" description="Nuclear localization signal" evidence="1">
    <location>
        <begin position="26"/>
        <end position="32"/>
    </location>
</feature>
<feature type="short sequence motif" description="Tryptophan repeat motif" evidence="1">
    <location>
        <begin position="1008"/>
        <end position="1024"/>
    </location>
</feature>
<feature type="compositionally biased region" description="Basic and acidic residues" evidence="18">
    <location>
        <begin position="462"/>
        <end position="508"/>
    </location>
</feature>
<feature type="active site" description="For protease activity; shared with dimeric partner" evidence="17">
    <location>
        <position position="537"/>
    </location>
</feature>
<feature type="binding site" evidence="1">
    <location>
        <position position="721"/>
    </location>
    <ligand>
        <name>Mg(2+)</name>
        <dbReference type="ChEBI" id="CHEBI:18420"/>
        <label>1</label>
        <note>catalytic; for reverse transcriptase activity</note>
    </ligand>
</feature>
<feature type="binding site" evidence="1">
    <location>
        <position position="796"/>
    </location>
    <ligand>
        <name>Mg(2+)</name>
        <dbReference type="ChEBI" id="CHEBI:18420"/>
        <label>1</label>
        <note>catalytic; for reverse transcriptase activity</note>
    </ligand>
</feature>
<feature type="binding site" evidence="1">
    <location>
        <position position="797"/>
    </location>
    <ligand>
        <name>Mg(2+)</name>
        <dbReference type="ChEBI" id="CHEBI:18420"/>
        <label>1</label>
        <note>catalytic; for reverse transcriptase activity</note>
    </ligand>
</feature>
<feature type="binding site" evidence="1">
    <location>
        <position position="1053"/>
    </location>
    <ligand>
        <name>Mg(2+)</name>
        <dbReference type="ChEBI" id="CHEBI:18420"/>
        <label>2</label>
        <note>catalytic; for RNase H activity</note>
    </ligand>
</feature>
<feature type="binding site" evidence="1">
    <location>
        <position position="1088"/>
    </location>
    <ligand>
        <name>Mg(2+)</name>
        <dbReference type="ChEBI" id="CHEBI:18420"/>
        <label>2</label>
        <note>catalytic; for RNase H activity</note>
    </ligand>
</feature>
<feature type="binding site" evidence="1">
    <location>
        <position position="1108"/>
    </location>
    <ligand>
        <name>Mg(2+)</name>
        <dbReference type="ChEBI" id="CHEBI:18420"/>
        <label>2</label>
        <note>catalytic; for RNase H activity</note>
    </ligand>
</feature>
<feature type="binding site" evidence="1">
    <location>
        <position position="1159"/>
    </location>
    <ligand>
        <name>Mg(2+)</name>
        <dbReference type="ChEBI" id="CHEBI:18420"/>
        <label>2</label>
        <note>catalytic; for RNase H activity</note>
    </ligand>
</feature>
<feature type="binding site" evidence="14">
    <location>
        <position position="1182"/>
    </location>
    <ligand>
        <name>Zn(2+)</name>
        <dbReference type="ChEBI" id="CHEBI:29105"/>
    </ligand>
</feature>
<feature type="binding site" evidence="14">
    <location>
        <position position="1186"/>
    </location>
    <ligand>
        <name>Zn(2+)</name>
        <dbReference type="ChEBI" id="CHEBI:29105"/>
    </ligand>
</feature>
<feature type="binding site" evidence="14">
    <location>
        <position position="1210"/>
    </location>
    <ligand>
        <name>Zn(2+)</name>
        <dbReference type="ChEBI" id="CHEBI:29105"/>
    </ligand>
</feature>
<feature type="binding site" evidence="14">
    <location>
        <position position="1213"/>
    </location>
    <ligand>
        <name>Zn(2+)</name>
        <dbReference type="ChEBI" id="CHEBI:29105"/>
    </ligand>
</feature>
<feature type="binding site" evidence="1">
    <location>
        <position position="1234"/>
    </location>
    <ligand>
        <name>Mg(2+)</name>
        <dbReference type="ChEBI" id="CHEBI:18420"/>
        <label>3</label>
        <note>catalytic; for integrase activity</note>
    </ligand>
</feature>
<feature type="binding site" evidence="1">
    <location>
        <position position="1286"/>
    </location>
    <ligand>
        <name>Mg(2+)</name>
        <dbReference type="ChEBI" id="CHEBI:18420"/>
        <label>3</label>
        <note>catalytic; for integrase activity</note>
    </ligand>
</feature>
<feature type="binding site" evidence="5">
    <location>
        <position position="1322"/>
    </location>
    <ligand>
        <name>Mg(2+)</name>
        <dbReference type="ChEBI" id="CHEBI:18420"/>
        <label>3</label>
        <note>catalytic; for integrase activity</note>
    </ligand>
</feature>
<feature type="site" description="Cleavage; by viral protease" evidence="1">
    <location>
        <begin position="135"/>
        <end position="136"/>
    </location>
</feature>
<feature type="site" description="Cis/trans isomerization of proline peptide bond; by human PPIA/CYPA" evidence="1">
    <location>
        <begin position="222"/>
        <end position="223"/>
    </location>
</feature>
<feature type="site" description="Cleavage; by viral protease" evidence="1">
    <location>
        <begin position="365"/>
        <end position="366"/>
    </location>
</feature>
<feature type="site" description="Cleavage; by viral protease" evidence="1">
    <location>
        <begin position="382"/>
        <end position="383"/>
    </location>
</feature>
<feature type="site" description="Cleavage; by viral protease" evidence="9">
    <location>
        <begin position="431"/>
        <end position="432"/>
    </location>
</feature>
<feature type="site" description="Cleavage; by viral protease" evidence="1">
    <location>
        <begin position="445"/>
        <end position="446"/>
    </location>
</feature>
<feature type="site" description="Cleavage; by viral protease" evidence="1">
    <location>
        <begin position="512"/>
        <end position="513"/>
    </location>
</feature>
<feature type="site" description="Cleavage; by viral protease" evidence="1">
    <location>
        <begin position="611"/>
        <end position="612"/>
    </location>
</feature>
<feature type="site" description="Essential for RT p66/p51 heterodimerization" evidence="1">
    <location>
        <position position="1011"/>
    </location>
</feature>
<feature type="site" description="Essential for RT p66/p51 heterodimerization" evidence="1">
    <location>
        <position position="1024"/>
    </location>
</feature>
<feature type="site" description="Cleavage; by viral protease; partial" evidence="1">
    <location>
        <begin position="1050"/>
        <end position="1051"/>
    </location>
</feature>
<feature type="site" description="Cleavage; by viral protease" evidence="1">
    <location>
        <begin position="1170"/>
        <end position="1171"/>
    </location>
</feature>
<feature type="lipid moiety-binding region" description="N-myristoyl glycine; by host" evidence="1">
    <location>
        <position position="2"/>
    </location>
</feature>
<reference key="1">
    <citation type="journal article" date="1990" name="J. Virol.">
        <title>Molecular characterization of an attenuated human immunodeficiency virus type 2 isolate.</title>
        <authorList>
            <person name="Kumar P."/>
            <person name="Hui H."/>
            <person name="Kappes J.C."/>
            <person name="Haggarty B.S."/>
            <person name="Hoxie J.A."/>
            <person name="Arya S.K."/>
            <person name="Shaw G.M."/>
            <person name="Hahn B.H."/>
        </authorList>
    </citation>
    <scope>NUCLEOTIDE SEQUENCE [GENOMIC DNA]</scope>
</reference>
<reference key="2">
    <citation type="journal article" date="1996" name="Curr. Top. Microbiol. Immunol.">
        <title>Proteolytic processing and particle maturation.</title>
        <authorList>
            <person name="Vogt V.M."/>
        </authorList>
    </citation>
    <scope>REVIEW</scope>
</reference>
<reference key="3">
    <citation type="journal article" date="1999" name="J. Mol. Biol.">
        <title>Structural biology of HIV.</title>
        <authorList>
            <person name="Turner B.G."/>
            <person name="Summers M.F."/>
        </authorList>
    </citation>
    <scope>REVIEW</scope>
</reference>
<reference key="4">
    <citation type="journal article" date="2001" name="Annu. Rev. Genet.">
        <title>Mechanisms of retroviral recombination.</title>
        <authorList>
            <person name="Negroni M."/>
            <person name="Buc H."/>
        </authorList>
    </citation>
    <scope>REVIEW</scope>
</reference>
<reference key="5">
    <citation type="journal article" date="2002" name="Genome Biol.">
        <title>Retroviral proteases.</title>
        <authorList>
            <person name="Dunn B.M."/>
            <person name="Goodenow M.M."/>
            <person name="Gustchina A."/>
            <person name="Wlodawer A."/>
        </authorList>
    </citation>
    <scope>REVIEW</scope>
</reference>
<gene>
    <name type="primary">gag-pol</name>
</gene>
<keyword id="KW-0014">AIDS</keyword>
<keyword id="KW-0064">Aspartyl protease</keyword>
<keyword id="KW-0167">Capsid protein</keyword>
<keyword id="KW-0229">DNA integration</keyword>
<keyword id="KW-0233">DNA recombination</keyword>
<keyword id="KW-0238">DNA-binding</keyword>
<keyword id="KW-0239">DNA-directed DNA polymerase</keyword>
<keyword id="KW-0255">Endonuclease</keyword>
<keyword id="KW-1262">Eukaryotic host gene expression shutoff by virus</keyword>
<keyword id="KW-1193">Eukaryotic host translation shutoff by virus</keyword>
<keyword id="KW-1032">Host cell membrane</keyword>
<keyword id="KW-1035">Host cytoplasm</keyword>
<keyword id="KW-1039">Host endosome</keyword>
<keyword id="KW-1190">Host gene expression shutoff by virus</keyword>
<keyword id="KW-1043">Host membrane</keyword>
<keyword id="KW-1048">Host nucleus</keyword>
<keyword id="KW-0945">Host-virus interaction</keyword>
<keyword id="KW-0378">Hydrolase</keyword>
<keyword id="KW-0446">Lipid-binding</keyword>
<keyword id="KW-0449">Lipoprotein</keyword>
<keyword id="KW-0460">Magnesium</keyword>
<keyword id="KW-0472">Membrane</keyword>
<keyword id="KW-0479">Metal-binding</keyword>
<keyword id="KW-0511">Multifunctional enzyme</keyword>
<keyword id="KW-0519">Myristate</keyword>
<keyword id="KW-0540">Nuclease</keyword>
<keyword id="KW-0548">Nucleotidyltransferase</keyword>
<keyword id="KW-0645">Protease</keyword>
<keyword id="KW-0677">Repeat</keyword>
<keyword id="KW-0688">Ribosomal frameshifting</keyword>
<keyword id="KW-0694">RNA-binding</keyword>
<keyword id="KW-0695">RNA-directed DNA polymerase</keyword>
<keyword id="KW-0808">Transferase</keyword>
<keyword id="KW-1179">Viral genome integration</keyword>
<keyword id="KW-0543">Viral nucleoprotein</keyword>
<keyword id="KW-1163">Viral penetration into host nucleus</keyword>
<keyword id="KW-1188">Viral release from host cell</keyword>
<keyword id="KW-0946">Virion</keyword>
<keyword id="KW-0917">Virion maturation</keyword>
<keyword id="KW-1160">Virus entry into host cell</keyword>
<keyword id="KW-0862">Zinc</keyword>
<keyword id="KW-0863">Zinc-finger</keyword>
<organism>
    <name type="scientific">Human immunodeficiency virus type 2 subtype A (isolate ST)</name>
    <name type="common">HIV-2</name>
    <dbReference type="NCBI Taxonomy" id="11721"/>
    <lineage>
        <taxon>Viruses</taxon>
        <taxon>Riboviria</taxon>
        <taxon>Pararnavirae</taxon>
        <taxon>Artverviricota</taxon>
        <taxon>Revtraviricetes</taxon>
        <taxon>Ortervirales</taxon>
        <taxon>Retroviridae</taxon>
        <taxon>Orthoretrovirinae</taxon>
        <taxon>Lentivirus</taxon>
        <taxon>Human immunodeficiency virus 2</taxon>
    </lineage>
</organism>
<evidence type="ECO:0000250" key="1"/>
<evidence type="ECO:0000250" key="2">
    <source>
        <dbReference type="UniProtKB" id="P03348"/>
    </source>
</evidence>
<evidence type="ECO:0000250" key="3">
    <source>
        <dbReference type="UniProtKB" id="P03366"/>
    </source>
</evidence>
<evidence type="ECO:0000250" key="4">
    <source>
        <dbReference type="UniProtKB" id="P03367"/>
    </source>
</evidence>
<evidence type="ECO:0000250" key="5">
    <source>
        <dbReference type="UniProtKB" id="P04585"/>
    </source>
</evidence>
<evidence type="ECO:0000250" key="6">
    <source>
        <dbReference type="UniProtKB" id="P04591"/>
    </source>
</evidence>
<evidence type="ECO:0000250" key="7">
    <source>
        <dbReference type="UniProtKB" id="P12493"/>
    </source>
</evidence>
<evidence type="ECO:0000250" key="8">
    <source>
        <dbReference type="UniProtKB" id="P12497"/>
    </source>
</evidence>
<evidence type="ECO:0000255" key="9"/>
<evidence type="ECO:0000255" key="10">
    <source>
        <dbReference type="PROSITE-ProRule" id="PRU00047"/>
    </source>
</evidence>
<evidence type="ECO:0000255" key="11">
    <source>
        <dbReference type="PROSITE-ProRule" id="PRU00275"/>
    </source>
</evidence>
<evidence type="ECO:0000255" key="12">
    <source>
        <dbReference type="PROSITE-ProRule" id="PRU00405"/>
    </source>
</evidence>
<evidence type="ECO:0000255" key="13">
    <source>
        <dbReference type="PROSITE-ProRule" id="PRU00408"/>
    </source>
</evidence>
<evidence type="ECO:0000255" key="14">
    <source>
        <dbReference type="PROSITE-ProRule" id="PRU00450"/>
    </source>
</evidence>
<evidence type="ECO:0000255" key="15">
    <source>
        <dbReference type="PROSITE-ProRule" id="PRU00457"/>
    </source>
</evidence>
<evidence type="ECO:0000255" key="16">
    <source>
        <dbReference type="PROSITE-ProRule" id="PRU00506"/>
    </source>
</evidence>
<evidence type="ECO:0000255" key="17">
    <source>
        <dbReference type="PROSITE-ProRule" id="PRU10094"/>
    </source>
</evidence>
<evidence type="ECO:0000256" key="18">
    <source>
        <dbReference type="SAM" id="MobiDB-lite"/>
    </source>
</evidence>
<evidence type="ECO:0000305" key="19"/>
<sequence length="1463" mass="164856">MGARNSVLRGKKADELEKIRLRPGGKKKYRLKHIVWAANELDRFGLAESLLESKEGCQKILTVLDPLVPTGSENLKSLFNTVCVIWCIHAEEKAKDTEEAKQKVQRHLVAETKTTEKMPSTSRPTAPPSGNGGNFPVQQVAGNYTHVPLSPRTLNAWVKLVEEKKFGAEVVPGFQALSEGCTPYDINQMLNCVGDHQAAMQIIREIINEEAADWDAQHPIPGPLPAGQLREPRGSDIAGTTSTVEEQIQWMFRPQNPVPVGSIYRRWIQIGLQKCVRMYNPTNILDIKQGPKEPFQSYVDRFYKSLRAEQTDPAVKNWMTQTLLVQNANPDCKLVLKGLGINPTLEEMLTACQGVGGPGQKARLMAEALKEAMAPAPIPFAAAQQRRTIKCWNCGKEGHSARQCRAPRRQGCWKCGKAGHIMAKCPERQAGFLRVGPMGKEAPQFPCGPNPAGADTNSTPDRPSRGPTREVHAAREKAERAEREAIQRSDRGLPAARETRDTMQRDDRGLAAPQFSLWKRPVVTAHVEGQPVEVLLDTGADDSIVAGVELGSNYSPKIVGGIGGFINTKEYKNVEIRVLNKRVRATIMTGDTPINIFGRNILTALGMSLNLPVAKIEPIKIMLKPGKDGPKLRQWPLTKEKIEALKEICEKMEREGQLEEAPPTNPYNTPTFAIKKKDKNKWRMLIDFRELNKVTQDFTEIQLGIPHPAGLAKKKRITVLDVGDAYFSIPLHEDFRQYTAFTLPSINNAEPGKRYIYKVSPQGWKGSPAIFQYTMRQVLEPFRKANPDIILIQYMDDILIASDRTDLEHDRVVLQLKELLNGLGFSTPDEKFQKDPPYQWMGYELWPTKWKLQRIQLPQKEVWTVNDIQKLVGVLNWAAQIYPGIKTRNLCRLIRGKMTLTEEVQWTELAEAELEENKIILSQEQEGCYYQEEKELEATVQKDQDNQWTYKIHQGGKILKVGKYAKVKNTHTNGVRLLAQVVQKIGKEALVIWGRIPKFHLPVERDTWEQWWDNYWQVTWIPDWDFISTPPLVRLVFNLVKDPILGAETFYTDGSCNKQSREGKAGYITDRGRDKVRLLEQTTNQQAELEAFAMAVTDSGPKANIIVDSQYVMGIVAGQPTESESKIVNQIIEEMIKKEAIYVAWVPAHKGIGGNQEVDHLVSQGIRQVLFLEKIEPAQEEHEKYHSNVKELSHKFGLPKLVARQIVNTCTQCQQKGEAIHGQVNAELGTWQMDCTHLEGKIIIVAVHVASGFIEAEVIPQESGRQTALFLLKLASRWPITHLHTDNGANFTSQEVKMVAWWIGIEQSFGVPYNPQSQGVVEAMNHHLKNQISRIREQANTVETIVLMAVHCMNFKRRGGIGDMTPAERLINMVTAEQEIQFLQAKNSKLQNFRVYFREGRDQLWKGPGELLWKGDGAVIVKVGADIKIIPRRKAKIIKDYGGRQEMDSGSNLEGAREDGEVA</sequence>
<accession>P20876</accession>
<organismHost>
    <name type="scientific">Homo sapiens</name>
    <name type="common">Human</name>
    <dbReference type="NCBI Taxonomy" id="9606"/>
</organismHost>
<protein>
    <recommendedName>
        <fullName>Gag-Pol polyprotein</fullName>
    </recommendedName>
    <alternativeName>
        <fullName>Pr160Gag-Pol</fullName>
    </alternativeName>
    <component>
        <recommendedName>
            <fullName>Matrix protein p17</fullName>
            <shortName>MA</shortName>
        </recommendedName>
    </component>
    <component>
        <recommendedName>
            <fullName>Capsid protein p24</fullName>
            <shortName>CA</shortName>
        </recommendedName>
    </component>
    <component>
        <recommendedName>
            <fullName evidence="8">Spacer peptide 1</fullName>
            <shortName>SP1</shortName>
        </recommendedName>
        <alternativeName>
            <fullName>p2</fullName>
        </alternativeName>
    </component>
    <component>
        <recommendedName>
            <fullName>Nucleocapsid protein p7</fullName>
            <shortName>NC</shortName>
        </recommendedName>
    </component>
    <component>
        <recommendedName>
            <fullName>Transframe peptide</fullName>
            <shortName>TF</shortName>
        </recommendedName>
    </component>
    <component>
        <recommendedName>
            <fullName>p6-pol</fullName>
            <shortName>p6*</shortName>
        </recommendedName>
    </component>
    <component>
        <recommendedName>
            <fullName>Protease</fullName>
            <ecNumber>3.4.23.47</ecNumber>
        </recommendedName>
        <alternativeName>
            <fullName>PR</fullName>
        </alternativeName>
        <alternativeName>
            <fullName>Retropepsin</fullName>
        </alternativeName>
    </component>
    <component>
        <recommendedName>
            <fullName>Reverse transcriptase/ribonuclease H</fullName>
            <ecNumber>2.7.7.49</ecNumber>
            <ecNumber>2.7.7.7</ecNumber>
            <ecNumber>3.1.26.13</ecNumber>
        </recommendedName>
        <alternativeName>
            <fullName>Exoribonuclease H</fullName>
            <ecNumber>3.1.13.2</ecNumber>
        </alternativeName>
        <alternativeName>
            <fullName>p66 RT</fullName>
        </alternativeName>
    </component>
    <component>
        <recommendedName>
            <fullName>p51 RT</fullName>
        </recommendedName>
    </component>
    <component>
        <recommendedName>
            <fullName>p15</fullName>
        </recommendedName>
    </component>
    <component>
        <recommendedName>
            <fullName>Integrase</fullName>
            <shortName>IN</shortName>
            <ecNumber evidence="5">2.7.7.-</ecNumber>
            <ecNumber evidence="5">3.1.-.-</ecNumber>
        </recommendedName>
    </component>
</protein>
<proteinExistence type="inferred from homology"/>
<comment type="function">
    <molecule>Gag-Pol polyprotein</molecule>
    <text evidence="1">Mediates, with Gag polyprotein, the essential events in virion assembly, including binding the plasma membrane, making the protein-protein interactions necessary to create spherical particles, recruiting the viral Env proteins, and packaging the genomic RNA via direct interactions with the RNA packaging sequence (Psi). Gag-Pol polyprotein may regulate its own translation, by the binding genomic RNA in the 5'-UTR. At low concentration, the polyprotein would promote translation, whereas at high concentration, the polyprotein would encapsidate genomic RNA and then shut off translation.</text>
</comment>
<comment type="function">
    <molecule>Matrix protein p17</molecule>
    <text evidence="8">Targets the polyprotein to the plasma membrane via a multipartite membrane-binding signal, that includes its myristoylated N-terminus. Matrix protein is part of the pre-integration complex. Implicated in the release from host cell mediated by Vpu. Binds to RNA.</text>
</comment>
<comment type="function">
    <molecule>Capsid protein p24</molecule>
    <text evidence="5 8">Forms the conical core that encapsulates the genomic RNA-nucleocapsid complex in the virion. Most core are conical, with only 7% tubular. The core is constituted by capsid protein hexamer subunits. The core is disassembled soon after virion entry (By similarity). Host restriction factors such as TRIM5-alpha or TRIMCyp bind retroviral capsids and cause premature capsid disassembly, leading to blocks in reverse transcription. Capsid restriction by TRIM5 is one of the factors which restricts HIV-1 to the human species. Host PIN1 apparently facilitates the virion uncoating. On the other hand, interactions with PDZD8 or CYPA stabilize the capsid.</text>
</comment>
<comment type="function">
    <molecule>Nucleocapsid protein p7</molecule>
    <text evidence="5">Encapsulates and protects viral dimeric unspliced genomic RNA (gRNA). Binds these RNAs through its zinc fingers. Acts as a nucleic acid chaperone which is involved in rearangement of nucleic acid secondary structure during gRNA retrotranscription. Also facilitates template switch leading to recombination. As part of the polyprotein, participates in gRNA dimerization, packaging, tRNA incorporation and virion assembly.</text>
</comment>
<comment type="function">
    <molecule>Protease</molecule>
    <text evidence="5 11">Aspartyl protease that mediates proteolytic cleavages of Gag and Gag-Pol polyproteins during or shortly after the release of the virion from the plasma membrane. Cleavages take place as an ordered, step-wise cascade to yield mature proteins. This process is called maturation. Displays maximal activity during the budding process just prior to particle release from the cell. Also cleaves Nef and Vif, probably concomitantly with viral structural proteins on maturation of virus particles. Hydrolyzes host EIF4GI and PABP1 in order to shut off the capped cellular mRNA translation. The resulting inhibition of cellular protein synthesis serves to ensure maximal viral gene expression and to evade host immune response (By similarity).</text>
</comment>
<comment type="function">
    <molecule>Reverse transcriptase/ribonuclease H</molecule>
    <text evidence="5">Multifunctional enzyme that converts the viral RNA genome into dsDNA in the cytoplasm, shortly after virus entry into the cell. This enzyme displays a DNA polymerase activity that can copy either DNA or RNA templates, and a ribonuclease H (RNase H) activity that cleaves the RNA strand of RNA-DNA heteroduplexes in a partially processive 3' to 5' endonucleasic mode. Conversion of viral genomic RNA into dsDNA requires many steps. A tRNA(3)-Lys binds to the primer-binding site (PBS) situated at the 5'-end of the viral RNA. RT uses the 3' end of the tRNA primer to perform a short round of RNA-dependent minus-strand DNA synthesis. The reading proceeds through the U5 region and ends after the repeated (R) region which is present at both ends of viral RNA. The portion of the RNA-DNA heteroduplex is digested by the RNase H, resulting in a ssDNA product attached to the tRNA primer. This ssDNA/tRNA hybridizes with the identical R region situated at the 3' end of viral RNA. This template exchange, known as minus-strand DNA strong stop transfer, can be either intra- or intermolecular. RT uses the 3' end of this newly synthesized short ssDNA to perform the RNA-dependent minus-strand DNA synthesis of the whole template. RNase H digests the RNA template except for two polypurine tracts (PPTs) situated at the 5'-end and near the center of the genome. It is not clear if both polymerase and RNase H activities are simultaneous. RNase H probably can proceed both in a polymerase-dependent (RNA cut into small fragments by the same RT performing DNA synthesis) and a polymerase-independent mode (cleavage of remaining RNA fragments by free RTs). Secondly, RT performs DNA-directed plus-strand DNA synthesis using the PPTs that have not been removed by RNase H as primers. PPTs and tRNA primers are then removed by RNase H. The 3' and 5' ssDNA PBS regions hybridize to form a circular dsDNA intermediate. Strand displacement synthesis by RT to the PBS and PPT ends produces a blunt ended, linear dsDNA copy of the viral genome that includes long terminal repeats (LTRs) at both ends.</text>
</comment>
<comment type="function">
    <molecule>Integrase</molecule>
    <text evidence="5">Catalyzes viral DNA integration into the host chromosome, by performing a series of DNA cutting and joining reactions. This enzyme activity takes place after virion entry into a cell and reverse transcription of the RNA genome in dsDNA. The first step in the integration process is 3' processing. This step requires a complex comprising the viral genome, matrix protein, Vpr and integrase. This complex is called the pre-integration complex (PIC). The integrase protein removes 2 nucleotides from each 3' end of the viral DNA, leaving recessed CA OH's at the 3' ends. In the second step, the PIC enters cell nucleus. This process is mediated through integrase and Vpr proteins, and allows the virus to infect a non dividing cell. This ability to enter the nucleus is specific of lentiviruses, other retroviruses cannot and rely on cell division to access cell chromosomes. In the third step, termed strand transfer, the integrase protein joins the previously processed 3' ends to the 5' ends of strands of target cellular DNA at the site of integration. The 5'-ends are produced by integrase-catalyzed staggered cuts, 5 bp apart. A Y-shaped, gapped, recombination intermediate results, with the 5'-ends of the viral DNA strands and the 3' ends of target DNA strands remaining unjoined, flanking a gap of 5 bp. The last step is viral DNA integration into host chromosome. This involves host DNA repair synthesis in which the 5 bp gaps between the unjoined strands are filled in and then ligated. Since this process occurs at both cuts flanking the HIV genome, a 5 bp duplication of host DNA is produced at the ends of HIV-1 integration. Alternatively, Integrase may catalyze the excision of viral DNA just after strand transfer, this is termed disintegration.</text>
</comment>
<comment type="catalytic activity">
    <reaction evidence="11">
        <text>Endopeptidase for which the P1 residue is preferably hydrophobic.</text>
        <dbReference type="EC" id="3.4.23.47"/>
    </reaction>
</comment>
<comment type="catalytic activity">
    <reaction evidence="1">
        <text>Endohydrolysis of RNA in RNA/DNA hybrids. Three different cleavage modes: 1. sequence-specific internal cleavage of RNA. Human immunodeficiency virus type 1 and Moloney murine leukemia virus enzymes prefer to cleave the RNA strand one nucleotide away from the RNA-DNA junction. 2. RNA 5'-end directed cleavage 13-19 nucleotides from the RNA end. 3. DNA 3'-end directed cleavage 15-20 nucleotides away from the primer terminus.</text>
        <dbReference type="EC" id="3.1.26.13"/>
    </reaction>
</comment>
<comment type="catalytic activity">
    <reaction evidence="1">
        <text>3'-end directed exonucleolytic cleavage of viral RNA-DNA hybrid.</text>
        <dbReference type="EC" id="3.1.13.2"/>
    </reaction>
</comment>
<comment type="catalytic activity">
    <reaction evidence="12">
        <text>DNA(n) + a 2'-deoxyribonucleoside 5'-triphosphate = DNA(n+1) + diphosphate</text>
        <dbReference type="Rhea" id="RHEA:22508"/>
        <dbReference type="Rhea" id="RHEA-COMP:17339"/>
        <dbReference type="Rhea" id="RHEA-COMP:17340"/>
        <dbReference type="ChEBI" id="CHEBI:33019"/>
        <dbReference type="ChEBI" id="CHEBI:61560"/>
        <dbReference type="ChEBI" id="CHEBI:173112"/>
        <dbReference type="EC" id="2.7.7.49"/>
    </reaction>
</comment>
<comment type="catalytic activity">
    <reaction evidence="12">
        <text>DNA(n) + a 2'-deoxyribonucleoside 5'-triphosphate = DNA(n+1) + diphosphate</text>
        <dbReference type="Rhea" id="RHEA:22508"/>
        <dbReference type="Rhea" id="RHEA-COMP:17339"/>
        <dbReference type="Rhea" id="RHEA-COMP:17340"/>
        <dbReference type="ChEBI" id="CHEBI:33019"/>
        <dbReference type="ChEBI" id="CHEBI:61560"/>
        <dbReference type="ChEBI" id="CHEBI:173112"/>
        <dbReference type="EC" id="2.7.7.7"/>
    </reaction>
</comment>
<comment type="cofactor">
    <cofactor evidence="1">
        <name>Mg(2+)</name>
        <dbReference type="ChEBI" id="CHEBI:18420"/>
    </cofactor>
    <text evidence="1">Binds 2 magnesium ions for reverse transcriptase polymerase activity.</text>
</comment>
<comment type="cofactor">
    <cofactor evidence="1">
        <name>Mg(2+)</name>
        <dbReference type="ChEBI" id="CHEBI:18420"/>
    </cofactor>
    <text evidence="1">Binds 2 magnesium ions for ribonuclease H (RNase H) activity. Substrate-binding is a precondition for magnesium binding.</text>
</comment>
<comment type="cofactor">
    <cofactor evidence="1">
        <name>Mg(2+)</name>
        <dbReference type="ChEBI" id="CHEBI:18420"/>
    </cofactor>
    <text evidence="1">Magnesium ions are required for integrase activity. Binds at least 1, maybe 2 magnesium ions.</text>
</comment>
<comment type="activity regulation">
    <text evidence="1">Protease: The viral protease is inhibited by many synthetic protease inhibitors (PIs), such as amprenavir, atazanavir, indinavir, loprinavir, nelfinavir, ritonavir and saquinavir. Use of protease inhibitors in tritherapy regimens permit more ambitious therapeutic strategies. Reverse transcriptase/ribonuclease H: RT can be inhibited either by nucleoside RT inhibitors (NRTIs) or by non nucleoside RT inhibitors (NNRTIs). NRTIs act as chain terminators, whereas NNRTIs inhibit DNA polymerization by binding a small hydrophobic pocket near the RT active site and inducing an allosteric change in this region. Classical NRTIs are abacavir, adefovir (PMEA), didanosine (ddI), lamivudine (3TC), stavudine (d4T), tenofovir (PMPA), zalcitabine (ddC), and zidovudine (AZT). Classical NNRTIs are atevirdine (BHAP U-87201E), delavirdine, efavirenz (DMP-266), emivirine (I-EBU), and nevirapine (BI-RG-587). The tritherapies used as a basic effective treatment of AIDS associate two NRTIs and one NNRTI.</text>
</comment>
<comment type="subunit">
    <molecule>Matrix protein p17</molecule>
    <text evidence="6 7">Homotrimer; further assembles as hexamers of trimers. Interacts with gp41 (via C-terminus). Interacts with host CALM1; this interaction induces a conformational change in the Matrix protein, triggering exposure of the myristate group. Interacts with host AP3D1; this interaction allows the polyprotein trafficking to multivesicular bodies during virus assembly. Part of the pre-integration complex (PIC) which is composed of viral genome, matrix protein, Vpr and integrase.</text>
</comment>
<comment type="subunit">
    <molecule>Capsid protein p24</molecule>
    <text evidence="2 6 7">Homodimer; the homodimer further multimerizes as homohexamers or homopentamers. Interacts with human PPIA/CYPA. Interacts with human NUP153. Interacts with host PDZD8; this interaction stabilizes the capsid. Interacts with monkey TRIM5; this interaction destabilizes the capsid.</text>
</comment>
<comment type="subunit">
    <molecule>Protease</molecule>
    <text evidence="5 8">Homodimer, whose active site consists of two apposed aspartic acid residues.</text>
</comment>
<comment type="subunit">
    <molecule>Reverse transcriptase/ribonuclease H</molecule>
    <text evidence="3">Heterodimer of p66 RT and p51 RT (RT p66/p51) (By similarity). Heterodimerization of RT is essential for DNA polymerase activity (By similarity). The overall folding of the subdomains is similar in p66 RT and p51 RT but the spatial arrangements of the subdomains are dramatically different (By similarity).</text>
</comment>
<comment type="subunit">
    <molecule>Integrase</molecule>
    <text evidence="4 5 8">Homotetramer; may further associate as a homohexadecamer (By similarity). Part of the pre-integration complex (PIC) which is composed of viral genome, matrix protein, Vpr and integrase. Interacts with human SMARCB1/INI1 and human PSIP1/LEDGF isoform 1. Interacts with human KPNA3; this interaction might play a role in nuclear import of the pre-integration complex (By similarity). Interacts with human NUP153; this interaction might play a role in nuclear import of the pre-integration complex (By similarity).</text>
</comment>
<comment type="subcellular location">
    <molecule>Gag-Pol polyprotein</molecule>
    <subcellularLocation>
        <location>Host cell membrane</location>
        <topology>Lipid-anchor</topology>
    </subcellularLocation>
    <subcellularLocation>
        <location>Host endosome</location>
        <location>Host multivesicular body</location>
    </subcellularLocation>
    <text evidence="8">These locations are linked to virus assembly sites. The main location is the cell membrane, but under some circumstances, late endosomal compartments can serve as productive sites for virion assembly.</text>
</comment>
<comment type="subcellular location">
    <molecule>Matrix protein p17</molecule>
    <subcellularLocation>
        <location>Virion membrane</location>
        <topology evidence="19">Lipid-anchor</topology>
    </subcellularLocation>
    <subcellularLocation>
        <location evidence="1">Host nucleus</location>
    </subcellularLocation>
    <subcellularLocation>
        <location evidence="1">Host cytoplasm</location>
    </subcellularLocation>
</comment>
<comment type="subcellular location">
    <molecule>Capsid protein p24</molecule>
    <subcellularLocation>
        <location evidence="19">Virion</location>
    </subcellularLocation>
</comment>
<comment type="subcellular location">
    <molecule>Nucleocapsid protein p7</molecule>
    <subcellularLocation>
        <location evidence="19">Virion</location>
    </subcellularLocation>
</comment>
<comment type="subcellular location">
    <molecule>Reverse transcriptase/ribonuclease H</molecule>
    <subcellularLocation>
        <location evidence="19">Virion</location>
    </subcellularLocation>
</comment>
<comment type="subcellular location">
    <molecule>Integrase</molecule>
    <subcellularLocation>
        <location evidence="19">Virion</location>
    </subcellularLocation>
    <subcellularLocation>
        <location evidence="19">Host nucleus</location>
    </subcellularLocation>
    <subcellularLocation>
        <location evidence="19">Host cytoplasm</location>
    </subcellularLocation>
    <text evidence="19">Nuclear at initial phase, cytoplasmic at assembly.</text>
</comment>
<comment type="alternative products">
    <event type="ribosomal frameshifting"/>
    <isoform>
        <id>P20876-1</id>
        <name>Gag-Pol polyprotein</name>
        <sequence type="displayed"/>
    </isoform>
    <isoform>
        <id>P20874-1</id>
        <name>Gag polyprotein</name>
        <sequence type="external"/>
    </isoform>
    <text>Translation results in the formation of the Gag polyprotein most of the time. Ribosomal frameshifting at the gag-pol genes boundary occurs at low frequency and produces the Gag-Pol polyprotein. This strategy of translation probably allows the virus to modulate the quantity of each viral protein. Maintenance of a correct Gag to Gag-Pol ratio is essential for RNA dimerization and viral infectivity.</text>
</comment>
<comment type="domain">
    <molecule>Reverse transcriptase/ribonuclease H</molecule>
    <text evidence="1">RT is structured in five subdomains: finger, palm, thumb, connection and RNase H. Within the palm subdomain, the 'primer grip' region is thought to be involved in the positioning of the primer terminus for accommodating the incoming nucleotide. The RNase H domain stabilizes the association of RT with primer-template.</text>
</comment>
<comment type="domain">
    <molecule>Reverse transcriptase/ribonuclease H</molecule>
    <text evidence="1">The tryptophan repeat motif is involved in RT p66/p51 dimerization (By similarity).</text>
</comment>
<comment type="domain">
    <molecule>Integrase</molecule>
    <text evidence="1">The core domain contains the D-x(n)-D-x(35)-E motif, named for the phylogenetically conserved glutamic acid and aspartic acid residues and the invariant 35 amino acid spacing between the second and third acidic residues. Each acidic residue of the D,D(35)E motif is independently essential for the 3'-processing and strand transfer activities of purified integrase protein.</text>
</comment>
<comment type="PTM">
    <molecule>Gag-Pol polyprotein</molecule>
    <text evidence="5 12">Specific enzymatic cleavages by the viral protease yield mature proteins. The protease is released by autocatalytic cleavage. The polyprotein is cleaved during and after budding, this process is termed maturation. Proteolytic cleavage of p66 RT removes the RNase H domain to yield the p51 RT subunit. Nucleocapsid protein p7 might be further cleaved after virus entry.</text>
</comment>
<comment type="miscellaneous">
    <molecule>Reverse transcriptase/ribonuclease H</molecule>
    <text evidence="1">Error-prone enzyme that lacks a proof-reading function. High mutations rate is a direct consequence of this characteristic. RT also displays frequent template switching leading to high recombination rate. Recombination mostly occurs between homologous regions of the two copackaged RNA genomes. If these two RNA molecules derive from different viral strains, reverse transcription will give rise to highly recombinated proviral DNAs.</text>
</comment>
<comment type="miscellaneous">
    <molecule>Isoform Gag-Pol polyprotein</molecule>
    <text>Produced by -1 ribosomal frameshifting.</text>
</comment>